<protein>
    <recommendedName>
        <fullName evidence="1">Chorismate synthase</fullName>
        <shortName evidence="1">CS</shortName>
        <ecNumber evidence="1">4.2.3.5</ecNumber>
    </recommendedName>
    <alternativeName>
        <fullName evidence="1">5-enolpyruvylshikimate-3-phosphate phospholyase</fullName>
    </alternativeName>
</protein>
<accession>A6TL06</accession>
<dbReference type="EC" id="4.2.3.5" evidence="1"/>
<dbReference type="EMBL" id="CP000724">
    <property type="protein sequence ID" value="ABR46874.1"/>
    <property type="molecule type" value="Genomic_DNA"/>
</dbReference>
<dbReference type="RefSeq" id="WP_011971782.1">
    <property type="nucleotide sequence ID" value="NC_009633.1"/>
</dbReference>
<dbReference type="SMR" id="A6TL06"/>
<dbReference type="STRING" id="293826.Amet_0649"/>
<dbReference type="KEGG" id="amt:Amet_0649"/>
<dbReference type="eggNOG" id="COG0082">
    <property type="taxonomic scope" value="Bacteria"/>
</dbReference>
<dbReference type="HOGENOM" id="CLU_034547_2_0_9"/>
<dbReference type="OrthoDB" id="9771806at2"/>
<dbReference type="UniPathway" id="UPA00053">
    <property type="reaction ID" value="UER00090"/>
</dbReference>
<dbReference type="Proteomes" id="UP000001572">
    <property type="component" value="Chromosome"/>
</dbReference>
<dbReference type="GO" id="GO:0005829">
    <property type="term" value="C:cytosol"/>
    <property type="evidence" value="ECO:0007669"/>
    <property type="project" value="TreeGrafter"/>
</dbReference>
<dbReference type="GO" id="GO:0004107">
    <property type="term" value="F:chorismate synthase activity"/>
    <property type="evidence" value="ECO:0007669"/>
    <property type="project" value="UniProtKB-UniRule"/>
</dbReference>
<dbReference type="GO" id="GO:0010181">
    <property type="term" value="F:FMN binding"/>
    <property type="evidence" value="ECO:0007669"/>
    <property type="project" value="TreeGrafter"/>
</dbReference>
<dbReference type="GO" id="GO:0008652">
    <property type="term" value="P:amino acid biosynthetic process"/>
    <property type="evidence" value="ECO:0007669"/>
    <property type="project" value="UniProtKB-KW"/>
</dbReference>
<dbReference type="GO" id="GO:0009073">
    <property type="term" value="P:aromatic amino acid family biosynthetic process"/>
    <property type="evidence" value="ECO:0007669"/>
    <property type="project" value="UniProtKB-KW"/>
</dbReference>
<dbReference type="GO" id="GO:0009423">
    <property type="term" value="P:chorismate biosynthetic process"/>
    <property type="evidence" value="ECO:0007669"/>
    <property type="project" value="UniProtKB-UniRule"/>
</dbReference>
<dbReference type="CDD" id="cd07304">
    <property type="entry name" value="Chorismate_synthase"/>
    <property type="match status" value="1"/>
</dbReference>
<dbReference type="FunFam" id="3.60.150.10:FF:000002">
    <property type="entry name" value="Chorismate synthase"/>
    <property type="match status" value="1"/>
</dbReference>
<dbReference type="Gene3D" id="3.60.150.10">
    <property type="entry name" value="Chorismate synthase AroC"/>
    <property type="match status" value="1"/>
</dbReference>
<dbReference type="HAMAP" id="MF_00300">
    <property type="entry name" value="Chorismate_synth"/>
    <property type="match status" value="1"/>
</dbReference>
<dbReference type="InterPro" id="IPR000453">
    <property type="entry name" value="Chorismate_synth"/>
</dbReference>
<dbReference type="InterPro" id="IPR035904">
    <property type="entry name" value="Chorismate_synth_AroC_sf"/>
</dbReference>
<dbReference type="InterPro" id="IPR020541">
    <property type="entry name" value="Chorismate_synthase_CS"/>
</dbReference>
<dbReference type="NCBIfam" id="TIGR00033">
    <property type="entry name" value="aroC"/>
    <property type="match status" value="1"/>
</dbReference>
<dbReference type="NCBIfam" id="NF003793">
    <property type="entry name" value="PRK05382.1"/>
    <property type="match status" value="1"/>
</dbReference>
<dbReference type="PANTHER" id="PTHR21085">
    <property type="entry name" value="CHORISMATE SYNTHASE"/>
    <property type="match status" value="1"/>
</dbReference>
<dbReference type="PANTHER" id="PTHR21085:SF0">
    <property type="entry name" value="CHORISMATE SYNTHASE"/>
    <property type="match status" value="1"/>
</dbReference>
<dbReference type="Pfam" id="PF01264">
    <property type="entry name" value="Chorismate_synt"/>
    <property type="match status" value="1"/>
</dbReference>
<dbReference type="PIRSF" id="PIRSF001456">
    <property type="entry name" value="Chorismate_synth"/>
    <property type="match status" value="1"/>
</dbReference>
<dbReference type="SUPFAM" id="SSF103263">
    <property type="entry name" value="Chorismate synthase, AroC"/>
    <property type="match status" value="1"/>
</dbReference>
<dbReference type="PROSITE" id="PS00787">
    <property type="entry name" value="CHORISMATE_SYNTHASE_1"/>
    <property type="match status" value="1"/>
</dbReference>
<dbReference type="PROSITE" id="PS00788">
    <property type="entry name" value="CHORISMATE_SYNTHASE_2"/>
    <property type="match status" value="1"/>
</dbReference>
<comment type="function">
    <text evidence="1">Catalyzes the anti-1,4-elimination of the C-3 phosphate and the C-6 proR hydrogen from 5-enolpyruvylshikimate-3-phosphate (EPSP) to yield chorismate, which is the branch point compound that serves as the starting substrate for the three terminal pathways of aromatic amino acid biosynthesis. This reaction introduces a second double bond into the aromatic ring system.</text>
</comment>
<comment type="catalytic activity">
    <reaction evidence="1">
        <text>5-O-(1-carboxyvinyl)-3-phosphoshikimate = chorismate + phosphate</text>
        <dbReference type="Rhea" id="RHEA:21020"/>
        <dbReference type="ChEBI" id="CHEBI:29748"/>
        <dbReference type="ChEBI" id="CHEBI:43474"/>
        <dbReference type="ChEBI" id="CHEBI:57701"/>
        <dbReference type="EC" id="4.2.3.5"/>
    </reaction>
</comment>
<comment type="cofactor">
    <cofactor evidence="1">
        <name>FMNH2</name>
        <dbReference type="ChEBI" id="CHEBI:57618"/>
    </cofactor>
    <text evidence="1">Reduced FMN (FMNH(2)).</text>
</comment>
<comment type="pathway">
    <text evidence="1">Metabolic intermediate biosynthesis; chorismate biosynthesis; chorismate from D-erythrose 4-phosphate and phosphoenolpyruvate: step 7/7.</text>
</comment>
<comment type="subunit">
    <text evidence="1">Homotetramer.</text>
</comment>
<comment type="similarity">
    <text evidence="1">Belongs to the chorismate synthase family.</text>
</comment>
<proteinExistence type="inferred from homology"/>
<keyword id="KW-0028">Amino-acid biosynthesis</keyword>
<keyword id="KW-0057">Aromatic amino acid biosynthesis</keyword>
<keyword id="KW-0274">FAD</keyword>
<keyword id="KW-0285">Flavoprotein</keyword>
<keyword id="KW-0288">FMN</keyword>
<keyword id="KW-0456">Lyase</keyword>
<keyword id="KW-0521">NADP</keyword>
<keyword id="KW-1185">Reference proteome</keyword>
<sequence length="380" mass="42128">MFRLLTAGESHGKSLVGVIEGFPANVKIDIEEINRDLGRRQRGYGRGGRMKIEKDRVEILSGVRGGKTLGSPISFLIENKDYANWEPYMNPEAVDGEEKRVTQPRPGHGDLTGTLKYGFDDIRNVLERSSARETAVRVAIGSLAKQLMREFHIEVYSHVTAIGSVSLGEPVENIEKIKRAEDSEVRCLDPEVEKAMIEEIKRAKEEGDSLGGIFEIHVTGVPRGLGSYVQWDHKLDAKLAHALMSIQAIKGVEVGCGFDQAQKKGSQVHDEIFFSQEKDYYRKTNYAGGIEGGMSNGENIHLRCAMKPIPTLYKPLRTVDIETKEAVLATVERSDSCAVPAASIVGEMVAITVIAQEFLKKFGSDSLEEIRKTWKSYTSI</sequence>
<evidence type="ECO:0000255" key="1">
    <source>
        <dbReference type="HAMAP-Rule" id="MF_00300"/>
    </source>
</evidence>
<organism>
    <name type="scientific">Alkaliphilus metalliredigens (strain QYMF)</name>
    <dbReference type="NCBI Taxonomy" id="293826"/>
    <lineage>
        <taxon>Bacteria</taxon>
        <taxon>Bacillati</taxon>
        <taxon>Bacillota</taxon>
        <taxon>Clostridia</taxon>
        <taxon>Peptostreptococcales</taxon>
        <taxon>Natronincolaceae</taxon>
        <taxon>Alkaliphilus</taxon>
    </lineage>
</organism>
<name>AROC_ALKMQ</name>
<feature type="chain" id="PRO_0000322384" description="Chorismate synthase">
    <location>
        <begin position="1"/>
        <end position="380"/>
    </location>
</feature>
<feature type="binding site" evidence="1">
    <location>
        <position position="40"/>
    </location>
    <ligand>
        <name>NADP(+)</name>
        <dbReference type="ChEBI" id="CHEBI:58349"/>
    </ligand>
</feature>
<feature type="binding site" evidence="1">
    <location>
        <position position="46"/>
    </location>
    <ligand>
        <name>NADP(+)</name>
        <dbReference type="ChEBI" id="CHEBI:58349"/>
    </ligand>
</feature>
<feature type="binding site" evidence="1">
    <location>
        <begin position="128"/>
        <end position="130"/>
    </location>
    <ligand>
        <name>FMN</name>
        <dbReference type="ChEBI" id="CHEBI:58210"/>
    </ligand>
</feature>
<feature type="binding site" evidence="1">
    <location>
        <begin position="247"/>
        <end position="248"/>
    </location>
    <ligand>
        <name>FMN</name>
        <dbReference type="ChEBI" id="CHEBI:58210"/>
    </ligand>
</feature>
<feature type="binding site" evidence="1">
    <location>
        <position position="292"/>
    </location>
    <ligand>
        <name>FMN</name>
        <dbReference type="ChEBI" id="CHEBI:58210"/>
    </ligand>
</feature>
<feature type="binding site" evidence="1">
    <location>
        <begin position="307"/>
        <end position="311"/>
    </location>
    <ligand>
        <name>FMN</name>
        <dbReference type="ChEBI" id="CHEBI:58210"/>
    </ligand>
</feature>
<feature type="binding site" evidence="1">
    <location>
        <position position="333"/>
    </location>
    <ligand>
        <name>FMN</name>
        <dbReference type="ChEBI" id="CHEBI:58210"/>
    </ligand>
</feature>
<gene>
    <name evidence="1" type="primary">aroC</name>
    <name type="ordered locus">Amet_0649</name>
</gene>
<reference key="1">
    <citation type="journal article" date="2016" name="Genome Announc.">
        <title>Complete genome sequence of Alkaliphilus metalliredigens strain QYMF, an alkaliphilic and metal-reducing bacterium isolated from borax-contaminated leachate ponds.</title>
        <authorList>
            <person name="Hwang C."/>
            <person name="Copeland A."/>
            <person name="Lucas S."/>
            <person name="Lapidus A."/>
            <person name="Barry K."/>
            <person name="Detter J.C."/>
            <person name="Glavina Del Rio T."/>
            <person name="Hammon N."/>
            <person name="Israni S."/>
            <person name="Dalin E."/>
            <person name="Tice H."/>
            <person name="Pitluck S."/>
            <person name="Chertkov O."/>
            <person name="Brettin T."/>
            <person name="Bruce D."/>
            <person name="Han C."/>
            <person name="Schmutz J."/>
            <person name="Larimer F."/>
            <person name="Land M.L."/>
            <person name="Hauser L."/>
            <person name="Kyrpides N."/>
            <person name="Mikhailova N."/>
            <person name="Ye Q."/>
            <person name="Zhou J."/>
            <person name="Richardson P."/>
            <person name="Fields M.W."/>
        </authorList>
    </citation>
    <scope>NUCLEOTIDE SEQUENCE [LARGE SCALE GENOMIC DNA]</scope>
    <source>
        <strain>QYMF</strain>
    </source>
</reference>